<comment type="function">
    <text evidence="1">Serine protease that cleaves preferentially after Arg residues. Can also cleave after citrulline (deimidated arginine) and methylarginine residues.</text>
</comment>
<comment type="subcellular location">
    <subcellularLocation>
        <location evidence="1">Cytoplasmic granule lumen</location>
    </subcellularLocation>
    <subcellularLocation>
        <location evidence="1">Secreted</location>
    </subcellularLocation>
    <text evidence="1">Stored in cytoplasmic granules and secreted as active enzyme in response to stimulation of neutrophils.</text>
</comment>
<comment type="PTM">
    <text evidence="1">After cleavage of the signal peptide, the N-terminus is probably further processed by CTSC. Processing by CTSC is probably required for accumulation in cytoplasmic granules; in the absence of CTSC the protein does not accumulate.</text>
</comment>
<comment type="PTM">
    <text evidence="1">N-glycosylated.</text>
</comment>
<comment type="similarity">
    <text evidence="3">Belongs to the peptidase S1 family.</text>
</comment>
<comment type="caution">
    <text evidence="4">It is uncertain whether Met-1 or Met-7 is the initiator.</text>
</comment>
<reference key="1">
    <citation type="journal article" date="2004" name="Genome Res.">
        <title>The status, quality, and expansion of the NIH full-length cDNA project: the Mammalian Gene Collection (MGC).</title>
        <authorList>
            <consortium name="The MGC Project Team"/>
        </authorList>
    </citation>
    <scope>NUCLEOTIDE SEQUENCE [LARGE SCALE MRNA]</scope>
</reference>
<name>PRS57_MOUSE</name>
<gene>
    <name type="primary">Prss57</name>
    <name type="synonym">Prssl1</name>
</gene>
<sequence>MPSSTAMVPGTRGGWHCLVLTTAAALTQLMWLPGCCGSYIVGGHEVTPHSRPYMASVSFEGHHYCGGFLIHTHWVVSAAHCFSDRDPSMGLVVLGAHALLAPEPTQQTFSIAAAVSHPDFQPATQANDICLLRLNGSAVLGPAVRLLRLPRRNAKPPAAGTRCHVSGWGFVSDFEEPPPGLMEVEVRILDLSVCNSSWQGQLNPAMLCTHSGDRRRRGFCSADSGGPLVCGRRAHGLVSFSGLWCGDPKTPDVYTQVSAFVTWIWDVVRASSSPGSTGRSVRAV</sequence>
<organism>
    <name type="scientific">Mus musculus</name>
    <name type="common">Mouse</name>
    <dbReference type="NCBI Taxonomy" id="10090"/>
    <lineage>
        <taxon>Eukaryota</taxon>
        <taxon>Metazoa</taxon>
        <taxon>Chordata</taxon>
        <taxon>Craniata</taxon>
        <taxon>Vertebrata</taxon>
        <taxon>Euteleostomi</taxon>
        <taxon>Mammalia</taxon>
        <taxon>Eutheria</taxon>
        <taxon>Euarchontoglires</taxon>
        <taxon>Glires</taxon>
        <taxon>Rodentia</taxon>
        <taxon>Myomorpha</taxon>
        <taxon>Muroidea</taxon>
        <taxon>Muridae</taxon>
        <taxon>Murinae</taxon>
        <taxon>Mus</taxon>
        <taxon>Mus</taxon>
    </lineage>
</organism>
<evidence type="ECO:0000250" key="1">
    <source>
        <dbReference type="UniProtKB" id="Q6UWY2"/>
    </source>
</evidence>
<evidence type="ECO:0000255" key="2"/>
<evidence type="ECO:0000255" key="3">
    <source>
        <dbReference type="PROSITE-ProRule" id="PRU00274"/>
    </source>
</evidence>
<evidence type="ECO:0000305" key="4"/>
<feature type="signal peptide" evidence="2">
    <location>
        <begin position="1"/>
        <end position="35"/>
    </location>
</feature>
<feature type="chain" id="PRO_0000295854" description="Serine protease 57">
    <location>
        <begin position="36"/>
        <end position="284"/>
    </location>
</feature>
<feature type="domain" description="Peptidase S1" evidence="3">
    <location>
        <begin position="40"/>
        <end position="269"/>
    </location>
</feature>
<feature type="active site" description="Charge relay system" evidence="1">
    <location>
        <position position="80"/>
    </location>
</feature>
<feature type="active site" description="Charge relay system" evidence="1">
    <location>
        <position position="128"/>
    </location>
</feature>
<feature type="active site" description="Charge relay system" evidence="1">
    <location>
        <position position="224"/>
    </location>
</feature>
<feature type="glycosylation site" description="N-linked (GlcNAc...) asparagine" evidence="2">
    <location>
        <position position="135"/>
    </location>
</feature>
<feature type="disulfide bond" evidence="3">
    <location>
        <begin position="65"/>
        <end position="81"/>
    </location>
</feature>
<feature type="disulfide bond" evidence="3">
    <location>
        <begin position="163"/>
        <end position="230"/>
    </location>
</feature>
<feature type="disulfide bond" evidence="3">
    <location>
        <begin position="194"/>
        <end position="208"/>
    </location>
</feature>
<feature type="disulfide bond" evidence="3">
    <location>
        <begin position="220"/>
        <end position="245"/>
    </location>
</feature>
<dbReference type="EC" id="3.4.21.-" evidence="1"/>
<dbReference type="EMBL" id="BC116380">
    <property type="protein sequence ID" value="AAI16381.2"/>
    <property type="molecule type" value="mRNA"/>
</dbReference>
<dbReference type="CCDS" id="CCDS35968.1"/>
<dbReference type="RefSeq" id="NP_001036175.1">
    <property type="nucleotide sequence ID" value="NM_001042710.1"/>
</dbReference>
<dbReference type="RefSeq" id="XP_006514262.1">
    <property type="nucleotide sequence ID" value="XM_006514199.5"/>
</dbReference>
<dbReference type="RefSeq" id="XP_011241886.1">
    <property type="nucleotide sequence ID" value="XM_011243584.4"/>
</dbReference>
<dbReference type="RefSeq" id="XP_036011936.1">
    <property type="nucleotide sequence ID" value="XM_036156043.1"/>
</dbReference>
<dbReference type="SMR" id="Q14B24"/>
<dbReference type="FunCoup" id="Q14B24">
    <property type="interactions" value="107"/>
</dbReference>
<dbReference type="STRING" id="10090.ENSMUSP00000132215"/>
<dbReference type="MEROPS" id="S01.368"/>
<dbReference type="GlyCosmos" id="Q14B24">
    <property type="glycosylation" value="1 site, No reported glycans"/>
</dbReference>
<dbReference type="GlyGen" id="Q14B24">
    <property type="glycosylation" value="1 site"/>
</dbReference>
<dbReference type="PaxDb" id="10090-ENSMUSP00000132215"/>
<dbReference type="ProteomicsDB" id="291754"/>
<dbReference type="Antibodypedia" id="1455">
    <property type="antibodies" value="56 antibodies from 15 providers"/>
</dbReference>
<dbReference type="DNASU" id="73106"/>
<dbReference type="Ensembl" id="ENSMUST00000020573.13">
    <property type="protein sequence ID" value="ENSMUSP00000020573.7"/>
    <property type="gene ID" value="ENSMUSG00000020323.15"/>
</dbReference>
<dbReference type="Ensembl" id="ENSMUST00000169684.2">
    <property type="protein sequence ID" value="ENSMUSP00000132215.2"/>
    <property type="gene ID" value="ENSMUSG00000020323.15"/>
</dbReference>
<dbReference type="GeneID" id="73106"/>
<dbReference type="KEGG" id="mmu:73106"/>
<dbReference type="UCSC" id="uc007fzu.1">
    <property type="organism name" value="mouse"/>
</dbReference>
<dbReference type="AGR" id="MGI:1920356"/>
<dbReference type="CTD" id="400668"/>
<dbReference type="MGI" id="MGI:1920356">
    <property type="gene designation" value="Prss57"/>
</dbReference>
<dbReference type="VEuPathDB" id="HostDB:ENSMUSG00000020323"/>
<dbReference type="eggNOG" id="KOG3627">
    <property type="taxonomic scope" value="Eukaryota"/>
</dbReference>
<dbReference type="GeneTree" id="ENSGT00940000162457"/>
<dbReference type="HOGENOM" id="CLU_006842_1_0_1"/>
<dbReference type="InParanoid" id="Q14B24"/>
<dbReference type="OMA" id="VCNSSWR"/>
<dbReference type="OrthoDB" id="8440449at2759"/>
<dbReference type="PhylomeDB" id="Q14B24"/>
<dbReference type="TreeFam" id="TF333630"/>
<dbReference type="BioGRID-ORCS" id="73106">
    <property type="hits" value="1 hit in 78 CRISPR screens"/>
</dbReference>
<dbReference type="ChiTaRS" id="Prss57">
    <property type="organism name" value="mouse"/>
</dbReference>
<dbReference type="PRO" id="PR:Q14B24"/>
<dbReference type="Proteomes" id="UP000000589">
    <property type="component" value="Chromosome 10"/>
</dbReference>
<dbReference type="RNAct" id="Q14B24">
    <property type="molecule type" value="protein"/>
</dbReference>
<dbReference type="Bgee" id="ENSMUSG00000020323">
    <property type="expression patterns" value="Expressed in granulocyte and 32 other cell types or tissues"/>
</dbReference>
<dbReference type="ExpressionAtlas" id="Q14B24">
    <property type="expression patterns" value="baseline and differential"/>
</dbReference>
<dbReference type="GO" id="GO:0035578">
    <property type="term" value="C:azurophil granule lumen"/>
    <property type="evidence" value="ECO:0000250"/>
    <property type="project" value="UniProtKB"/>
</dbReference>
<dbReference type="GO" id="GO:0005615">
    <property type="term" value="C:extracellular space"/>
    <property type="evidence" value="ECO:0000250"/>
    <property type="project" value="UniProtKB"/>
</dbReference>
<dbReference type="GO" id="GO:0008201">
    <property type="term" value="F:heparin binding"/>
    <property type="evidence" value="ECO:0000250"/>
    <property type="project" value="UniProtKB"/>
</dbReference>
<dbReference type="GO" id="GO:0004252">
    <property type="term" value="F:serine-type endopeptidase activity"/>
    <property type="evidence" value="ECO:0007669"/>
    <property type="project" value="InterPro"/>
</dbReference>
<dbReference type="GO" id="GO:0008236">
    <property type="term" value="F:serine-type peptidase activity"/>
    <property type="evidence" value="ECO:0000250"/>
    <property type="project" value="UniProtKB"/>
</dbReference>
<dbReference type="GO" id="GO:0006508">
    <property type="term" value="P:proteolysis"/>
    <property type="evidence" value="ECO:0000250"/>
    <property type="project" value="UniProtKB"/>
</dbReference>
<dbReference type="CDD" id="cd00190">
    <property type="entry name" value="Tryp_SPc"/>
    <property type="match status" value="1"/>
</dbReference>
<dbReference type="FunFam" id="2.40.10.10:FF:000052">
    <property type="entry name" value="Neutrophil elastase"/>
    <property type="match status" value="1"/>
</dbReference>
<dbReference type="FunFam" id="2.40.10.10:FF:000068">
    <property type="entry name" value="transmembrane protease serine 2"/>
    <property type="match status" value="1"/>
</dbReference>
<dbReference type="Gene3D" id="2.40.10.10">
    <property type="entry name" value="Trypsin-like serine proteases"/>
    <property type="match status" value="2"/>
</dbReference>
<dbReference type="InterPro" id="IPR009003">
    <property type="entry name" value="Peptidase_S1_PA"/>
</dbReference>
<dbReference type="InterPro" id="IPR043504">
    <property type="entry name" value="Peptidase_S1_PA_chymotrypsin"/>
</dbReference>
<dbReference type="InterPro" id="IPR001314">
    <property type="entry name" value="Peptidase_S1A"/>
</dbReference>
<dbReference type="InterPro" id="IPR001254">
    <property type="entry name" value="Trypsin_dom"/>
</dbReference>
<dbReference type="InterPro" id="IPR018114">
    <property type="entry name" value="TRYPSIN_HIS"/>
</dbReference>
<dbReference type="PANTHER" id="PTHR24271">
    <property type="entry name" value="KALLIKREIN-RELATED"/>
    <property type="match status" value="1"/>
</dbReference>
<dbReference type="PANTHER" id="PTHR24271:SF55">
    <property type="entry name" value="SERINE PROTEASE 57"/>
    <property type="match status" value="1"/>
</dbReference>
<dbReference type="Pfam" id="PF00089">
    <property type="entry name" value="Trypsin"/>
    <property type="match status" value="1"/>
</dbReference>
<dbReference type="PRINTS" id="PR00722">
    <property type="entry name" value="CHYMOTRYPSIN"/>
</dbReference>
<dbReference type="SMART" id="SM00020">
    <property type="entry name" value="Tryp_SPc"/>
    <property type="match status" value="1"/>
</dbReference>
<dbReference type="SUPFAM" id="SSF50494">
    <property type="entry name" value="Trypsin-like serine proteases"/>
    <property type="match status" value="1"/>
</dbReference>
<dbReference type="PROSITE" id="PS50240">
    <property type="entry name" value="TRYPSIN_DOM"/>
    <property type="match status" value="1"/>
</dbReference>
<dbReference type="PROSITE" id="PS00134">
    <property type="entry name" value="TRYPSIN_HIS"/>
    <property type="match status" value="1"/>
</dbReference>
<protein>
    <recommendedName>
        <fullName>Serine protease 57</fullName>
        <ecNumber evidence="1">3.4.21.-</ecNumber>
    </recommendedName>
    <alternativeName>
        <fullName evidence="1">Neutrophil serine protease 4</fullName>
        <shortName evidence="1">NSP4</shortName>
    </alternativeName>
    <alternativeName>
        <fullName>Serine protease 1-like protein 1</fullName>
    </alternativeName>
</protein>
<keyword id="KW-1015">Disulfide bond</keyword>
<keyword id="KW-0325">Glycoprotein</keyword>
<keyword id="KW-0358">Heparin-binding</keyword>
<keyword id="KW-0378">Hydrolase</keyword>
<keyword id="KW-0645">Protease</keyword>
<keyword id="KW-1185">Reference proteome</keyword>
<keyword id="KW-0964">Secreted</keyword>
<keyword id="KW-0720">Serine protease</keyword>
<keyword id="KW-0732">Signal</keyword>
<proteinExistence type="evidence at transcript level"/>
<accession>Q14B24</accession>